<dbReference type="EC" id="2.1.1.107" evidence="1"/>
<dbReference type="EC" id="1.3.1.76" evidence="1"/>
<dbReference type="EC" id="4.99.1.4" evidence="1"/>
<dbReference type="EMBL" id="CU928160">
    <property type="protein sequence ID" value="CAR00308.1"/>
    <property type="molecule type" value="Genomic_DNA"/>
</dbReference>
<dbReference type="RefSeq" id="WP_000349863.1">
    <property type="nucleotide sequence ID" value="NC_011741.1"/>
</dbReference>
<dbReference type="SMR" id="B7M1S1"/>
<dbReference type="GeneID" id="75206312"/>
<dbReference type="KEGG" id="ecr:ECIAI1_3507"/>
<dbReference type="HOGENOM" id="CLU_011276_2_0_6"/>
<dbReference type="UniPathway" id="UPA00148">
    <property type="reaction ID" value="UER00211"/>
</dbReference>
<dbReference type="UniPathway" id="UPA00148">
    <property type="reaction ID" value="UER00222"/>
</dbReference>
<dbReference type="UniPathway" id="UPA00262">
    <property type="reaction ID" value="UER00211"/>
</dbReference>
<dbReference type="UniPathway" id="UPA00262">
    <property type="reaction ID" value="UER00222"/>
</dbReference>
<dbReference type="UniPathway" id="UPA00262">
    <property type="reaction ID" value="UER00376"/>
</dbReference>
<dbReference type="GO" id="GO:0051287">
    <property type="term" value="F:NAD binding"/>
    <property type="evidence" value="ECO:0007669"/>
    <property type="project" value="InterPro"/>
</dbReference>
<dbReference type="GO" id="GO:0043115">
    <property type="term" value="F:precorrin-2 dehydrogenase activity"/>
    <property type="evidence" value="ECO:0007669"/>
    <property type="project" value="UniProtKB-UniRule"/>
</dbReference>
<dbReference type="GO" id="GO:0051266">
    <property type="term" value="F:sirohydrochlorin ferrochelatase activity"/>
    <property type="evidence" value="ECO:0007669"/>
    <property type="project" value="UniProtKB-EC"/>
</dbReference>
<dbReference type="GO" id="GO:0004851">
    <property type="term" value="F:uroporphyrin-III C-methyltransferase activity"/>
    <property type="evidence" value="ECO:0007669"/>
    <property type="project" value="UniProtKB-UniRule"/>
</dbReference>
<dbReference type="GO" id="GO:0009236">
    <property type="term" value="P:cobalamin biosynthetic process"/>
    <property type="evidence" value="ECO:0007669"/>
    <property type="project" value="UniProtKB-UniRule"/>
</dbReference>
<dbReference type="GO" id="GO:0032259">
    <property type="term" value="P:methylation"/>
    <property type="evidence" value="ECO:0007669"/>
    <property type="project" value="UniProtKB-KW"/>
</dbReference>
<dbReference type="GO" id="GO:0019354">
    <property type="term" value="P:siroheme biosynthetic process"/>
    <property type="evidence" value="ECO:0007669"/>
    <property type="project" value="UniProtKB-UniRule"/>
</dbReference>
<dbReference type="CDD" id="cd11642">
    <property type="entry name" value="SUMT"/>
    <property type="match status" value="1"/>
</dbReference>
<dbReference type="FunFam" id="1.10.8.210:FF:000001">
    <property type="entry name" value="Siroheme synthase"/>
    <property type="match status" value="1"/>
</dbReference>
<dbReference type="FunFam" id="3.30.160.110:FF:000001">
    <property type="entry name" value="Siroheme synthase"/>
    <property type="match status" value="1"/>
</dbReference>
<dbReference type="FunFam" id="3.30.950.10:FF:000001">
    <property type="entry name" value="Siroheme synthase"/>
    <property type="match status" value="1"/>
</dbReference>
<dbReference type="FunFam" id="3.40.1010.10:FF:000001">
    <property type="entry name" value="Siroheme synthase"/>
    <property type="match status" value="1"/>
</dbReference>
<dbReference type="FunFam" id="3.40.50.720:FF:000092">
    <property type="entry name" value="Siroheme synthase"/>
    <property type="match status" value="1"/>
</dbReference>
<dbReference type="Gene3D" id="3.40.1010.10">
    <property type="entry name" value="Cobalt-precorrin-4 Transmethylase, Domain 1"/>
    <property type="match status" value="1"/>
</dbReference>
<dbReference type="Gene3D" id="3.30.950.10">
    <property type="entry name" value="Methyltransferase, Cobalt-precorrin-4 Transmethylase, Domain 2"/>
    <property type="match status" value="1"/>
</dbReference>
<dbReference type="Gene3D" id="3.40.50.720">
    <property type="entry name" value="NAD(P)-binding Rossmann-like Domain"/>
    <property type="match status" value="1"/>
</dbReference>
<dbReference type="Gene3D" id="1.10.8.210">
    <property type="entry name" value="Sirohaem synthase, dimerisation domain"/>
    <property type="match status" value="1"/>
</dbReference>
<dbReference type="Gene3D" id="3.30.160.110">
    <property type="entry name" value="Siroheme synthase, domain 2"/>
    <property type="match status" value="1"/>
</dbReference>
<dbReference type="HAMAP" id="MF_01646">
    <property type="entry name" value="Siroheme_synth"/>
    <property type="match status" value="1"/>
</dbReference>
<dbReference type="InterPro" id="IPR000878">
    <property type="entry name" value="4pyrrol_Mease"/>
</dbReference>
<dbReference type="InterPro" id="IPR035996">
    <property type="entry name" value="4pyrrol_Methylase_sf"/>
</dbReference>
<dbReference type="InterPro" id="IPR014777">
    <property type="entry name" value="4pyrrole_Mease_sub1"/>
</dbReference>
<dbReference type="InterPro" id="IPR014776">
    <property type="entry name" value="4pyrrole_Mease_sub2"/>
</dbReference>
<dbReference type="InterPro" id="IPR006366">
    <property type="entry name" value="CobA/CysG_C"/>
</dbReference>
<dbReference type="InterPro" id="IPR036291">
    <property type="entry name" value="NAD(P)-bd_dom_sf"/>
</dbReference>
<dbReference type="InterPro" id="IPR050161">
    <property type="entry name" value="Siro_Cobalamin_biosynth"/>
</dbReference>
<dbReference type="InterPro" id="IPR037115">
    <property type="entry name" value="Sirohaem_synt_dimer_dom_sf"/>
</dbReference>
<dbReference type="InterPro" id="IPR012409">
    <property type="entry name" value="Sirohaem_synth"/>
</dbReference>
<dbReference type="InterPro" id="IPR028281">
    <property type="entry name" value="Sirohaem_synthase_central"/>
</dbReference>
<dbReference type="InterPro" id="IPR019478">
    <property type="entry name" value="Sirohaem_synthase_dimer_dom"/>
</dbReference>
<dbReference type="InterPro" id="IPR006367">
    <property type="entry name" value="Sirohaem_synthase_N"/>
</dbReference>
<dbReference type="InterPro" id="IPR003043">
    <property type="entry name" value="Uropor_MeTrfase_CS"/>
</dbReference>
<dbReference type="NCBIfam" id="TIGR01469">
    <property type="entry name" value="cobA_cysG_Cterm"/>
    <property type="match status" value="1"/>
</dbReference>
<dbReference type="NCBIfam" id="TIGR01470">
    <property type="entry name" value="cysG_Nterm"/>
    <property type="match status" value="1"/>
</dbReference>
<dbReference type="NCBIfam" id="NF004790">
    <property type="entry name" value="PRK06136.1"/>
    <property type="match status" value="1"/>
</dbReference>
<dbReference type="NCBIfam" id="NF007922">
    <property type="entry name" value="PRK10637.1"/>
    <property type="match status" value="1"/>
</dbReference>
<dbReference type="PANTHER" id="PTHR45790:SF1">
    <property type="entry name" value="SIROHEME SYNTHASE"/>
    <property type="match status" value="1"/>
</dbReference>
<dbReference type="PANTHER" id="PTHR45790">
    <property type="entry name" value="SIROHEME SYNTHASE-RELATED"/>
    <property type="match status" value="1"/>
</dbReference>
<dbReference type="Pfam" id="PF10414">
    <property type="entry name" value="CysG_dimeriser"/>
    <property type="match status" value="1"/>
</dbReference>
<dbReference type="Pfam" id="PF13241">
    <property type="entry name" value="NAD_binding_7"/>
    <property type="match status" value="1"/>
</dbReference>
<dbReference type="Pfam" id="PF14824">
    <property type="entry name" value="Sirohm_synth_M"/>
    <property type="match status" value="1"/>
</dbReference>
<dbReference type="Pfam" id="PF00590">
    <property type="entry name" value="TP_methylase"/>
    <property type="match status" value="1"/>
</dbReference>
<dbReference type="PIRSF" id="PIRSF036426">
    <property type="entry name" value="Sirohaem_synth"/>
    <property type="match status" value="1"/>
</dbReference>
<dbReference type="SUPFAM" id="SSF51735">
    <property type="entry name" value="NAD(P)-binding Rossmann-fold domains"/>
    <property type="match status" value="1"/>
</dbReference>
<dbReference type="SUPFAM" id="SSF75615">
    <property type="entry name" value="Siroheme synthase middle domains-like"/>
    <property type="match status" value="1"/>
</dbReference>
<dbReference type="SUPFAM" id="SSF53790">
    <property type="entry name" value="Tetrapyrrole methylase"/>
    <property type="match status" value="1"/>
</dbReference>
<dbReference type="PROSITE" id="PS00839">
    <property type="entry name" value="SUMT_1"/>
    <property type="match status" value="1"/>
</dbReference>
<dbReference type="PROSITE" id="PS00840">
    <property type="entry name" value="SUMT_2"/>
    <property type="match status" value="1"/>
</dbReference>
<sequence length="457" mass="49981">MDHLPIFCQLRDRDCLIVGGGDVAERKARLLLDAGARLTVNALAFIPQFTAWADAGMLTLVEGPFDESLLDTCWLAIAATDDDALNQRVSEAAEARRIFCNVVDAPKAASFIMPSIIDRSPLMVAVSSGGTSPVLARLLREKLESLLPLHLGQVAKYAGQLRGRVKQQFATMSERRRFWEKLFVNDRLAQSLANNDQKAITETTEQLINEPLDHRGEVVLVGAGPGDAGLLTLKGLQQIQQADVVVYDRLVSDDIMNLVRRDADRVFVGKRAGYHCVPQEEINQILLREAQKGKRVVRLKGGDPFIFGRGGEELETLCNAGIPFSVVPGITAASGCSAYSGIPLTHRDYAQSVRLITGHLKTGGELDWENLAAEKQTLVFYMGLNQAATIQQKLIEHGMPGEMPVAIVENGTAVTQRVIDGTLTQLGELAQQMNSPSLIIIGRVVGLRDKLNWFSNH</sequence>
<comment type="function">
    <text evidence="1">Multifunctional enzyme that catalyzes the SAM-dependent methylations of uroporphyrinogen III at position C-2 and C-7 to form precorrin-2 via precorrin-1. Then it catalyzes the NAD-dependent ring dehydrogenation of precorrin-2 to yield sirohydrochlorin. Finally, it catalyzes the ferrochelation of sirohydrochlorin to yield siroheme.</text>
</comment>
<comment type="catalytic activity">
    <reaction evidence="1">
        <text>uroporphyrinogen III + 2 S-adenosyl-L-methionine = precorrin-2 + 2 S-adenosyl-L-homocysteine + H(+)</text>
        <dbReference type="Rhea" id="RHEA:32459"/>
        <dbReference type="ChEBI" id="CHEBI:15378"/>
        <dbReference type="ChEBI" id="CHEBI:57308"/>
        <dbReference type="ChEBI" id="CHEBI:57856"/>
        <dbReference type="ChEBI" id="CHEBI:58827"/>
        <dbReference type="ChEBI" id="CHEBI:59789"/>
        <dbReference type="EC" id="2.1.1.107"/>
    </reaction>
</comment>
<comment type="catalytic activity">
    <reaction evidence="1">
        <text>precorrin-2 + NAD(+) = sirohydrochlorin + NADH + 2 H(+)</text>
        <dbReference type="Rhea" id="RHEA:15613"/>
        <dbReference type="ChEBI" id="CHEBI:15378"/>
        <dbReference type="ChEBI" id="CHEBI:57540"/>
        <dbReference type="ChEBI" id="CHEBI:57945"/>
        <dbReference type="ChEBI" id="CHEBI:58351"/>
        <dbReference type="ChEBI" id="CHEBI:58827"/>
        <dbReference type="EC" id="1.3.1.76"/>
    </reaction>
</comment>
<comment type="catalytic activity">
    <reaction evidence="1">
        <text>siroheme + 2 H(+) = sirohydrochlorin + Fe(2+)</text>
        <dbReference type="Rhea" id="RHEA:24360"/>
        <dbReference type="ChEBI" id="CHEBI:15378"/>
        <dbReference type="ChEBI" id="CHEBI:29033"/>
        <dbReference type="ChEBI" id="CHEBI:58351"/>
        <dbReference type="ChEBI" id="CHEBI:60052"/>
        <dbReference type="EC" id="4.99.1.4"/>
    </reaction>
</comment>
<comment type="pathway">
    <text evidence="1">Cofactor biosynthesis; adenosylcobalamin biosynthesis; precorrin-2 from uroporphyrinogen III: step 1/1.</text>
</comment>
<comment type="pathway">
    <text evidence="1">Cofactor biosynthesis; adenosylcobalamin biosynthesis; sirohydrochlorin from precorrin-2: step 1/1.</text>
</comment>
<comment type="pathway">
    <text evidence="1">Porphyrin-containing compound metabolism; siroheme biosynthesis; precorrin-2 from uroporphyrinogen III: step 1/1.</text>
</comment>
<comment type="pathway">
    <text evidence="1">Porphyrin-containing compound metabolism; siroheme biosynthesis; siroheme from sirohydrochlorin: step 1/1.</text>
</comment>
<comment type="pathway">
    <text evidence="1">Porphyrin-containing compound metabolism; siroheme biosynthesis; sirohydrochlorin from precorrin-2: step 1/1.</text>
</comment>
<comment type="similarity">
    <text evidence="1">In the N-terminal section; belongs to the precorrin-2 dehydrogenase / sirohydrochlorin ferrochelatase family.</text>
</comment>
<comment type="similarity">
    <text evidence="1">In the C-terminal section; belongs to the precorrin methyltransferase family.</text>
</comment>
<protein>
    <recommendedName>
        <fullName evidence="1">Siroheme synthase</fullName>
    </recommendedName>
    <domain>
        <recommendedName>
            <fullName evidence="1">Uroporphyrinogen-III C-methyltransferase</fullName>
            <shortName evidence="1">Urogen III methylase</shortName>
            <ecNumber evidence="1">2.1.1.107</ecNumber>
        </recommendedName>
        <alternativeName>
            <fullName evidence="1">SUMT</fullName>
        </alternativeName>
        <alternativeName>
            <fullName evidence="1">Uroporphyrinogen III methylase</fullName>
            <shortName evidence="1">UROM</shortName>
        </alternativeName>
    </domain>
    <domain>
        <recommendedName>
            <fullName evidence="1">Precorrin-2 dehydrogenase</fullName>
            <ecNumber evidence="1">1.3.1.76</ecNumber>
        </recommendedName>
    </domain>
    <domain>
        <recommendedName>
            <fullName evidence="1">Sirohydrochlorin ferrochelatase</fullName>
            <ecNumber evidence="1">4.99.1.4</ecNumber>
        </recommendedName>
    </domain>
</protein>
<keyword id="KW-0169">Cobalamin biosynthesis</keyword>
<keyword id="KW-0456">Lyase</keyword>
<keyword id="KW-0489">Methyltransferase</keyword>
<keyword id="KW-0511">Multifunctional enzyme</keyword>
<keyword id="KW-0520">NAD</keyword>
<keyword id="KW-0560">Oxidoreductase</keyword>
<keyword id="KW-0597">Phosphoprotein</keyword>
<keyword id="KW-0627">Porphyrin biosynthesis</keyword>
<keyword id="KW-0949">S-adenosyl-L-methionine</keyword>
<keyword id="KW-0808">Transferase</keyword>
<organism>
    <name type="scientific">Escherichia coli O8 (strain IAI1)</name>
    <dbReference type="NCBI Taxonomy" id="585034"/>
    <lineage>
        <taxon>Bacteria</taxon>
        <taxon>Pseudomonadati</taxon>
        <taxon>Pseudomonadota</taxon>
        <taxon>Gammaproteobacteria</taxon>
        <taxon>Enterobacterales</taxon>
        <taxon>Enterobacteriaceae</taxon>
        <taxon>Escherichia</taxon>
    </lineage>
</organism>
<gene>
    <name evidence="1" type="primary">cysG</name>
    <name type="ordered locus">ECIAI1_3507</name>
</gene>
<proteinExistence type="inferred from homology"/>
<accession>B7M1S1</accession>
<name>CYSG_ECO8A</name>
<reference key="1">
    <citation type="journal article" date="2009" name="PLoS Genet.">
        <title>Organised genome dynamics in the Escherichia coli species results in highly diverse adaptive paths.</title>
        <authorList>
            <person name="Touchon M."/>
            <person name="Hoede C."/>
            <person name="Tenaillon O."/>
            <person name="Barbe V."/>
            <person name="Baeriswyl S."/>
            <person name="Bidet P."/>
            <person name="Bingen E."/>
            <person name="Bonacorsi S."/>
            <person name="Bouchier C."/>
            <person name="Bouvet O."/>
            <person name="Calteau A."/>
            <person name="Chiapello H."/>
            <person name="Clermont O."/>
            <person name="Cruveiller S."/>
            <person name="Danchin A."/>
            <person name="Diard M."/>
            <person name="Dossat C."/>
            <person name="Karoui M.E."/>
            <person name="Frapy E."/>
            <person name="Garry L."/>
            <person name="Ghigo J.M."/>
            <person name="Gilles A.M."/>
            <person name="Johnson J."/>
            <person name="Le Bouguenec C."/>
            <person name="Lescat M."/>
            <person name="Mangenot S."/>
            <person name="Martinez-Jehanne V."/>
            <person name="Matic I."/>
            <person name="Nassif X."/>
            <person name="Oztas S."/>
            <person name="Petit M.A."/>
            <person name="Pichon C."/>
            <person name="Rouy Z."/>
            <person name="Ruf C.S."/>
            <person name="Schneider D."/>
            <person name="Tourret J."/>
            <person name="Vacherie B."/>
            <person name="Vallenet D."/>
            <person name="Medigue C."/>
            <person name="Rocha E.P.C."/>
            <person name="Denamur E."/>
        </authorList>
    </citation>
    <scope>NUCLEOTIDE SEQUENCE [LARGE SCALE GENOMIC DNA]</scope>
    <source>
        <strain>IAI1</strain>
    </source>
</reference>
<evidence type="ECO:0000255" key="1">
    <source>
        <dbReference type="HAMAP-Rule" id="MF_01646"/>
    </source>
</evidence>
<feature type="chain" id="PRO_1000186942" description="Siroheme synthase">
    <location>
        <begin position="1"/>
        <end position="457"/>
    </location>
</feature>
<feature type="region of interest" description="Precorrin-2 dehydrogenase /sirohydrochlorin ferrochelatase" evidence="1">
    <location>
        <begin position="1"/>
        <end position="204"/>
    </location>
</feature>
<feature type="region of interest" description="Uroporphyrinogen-III C-methyltransferase" evidence="1">
    <location>
        <begin position="216"/>
        <end position="457"/>
    </location>
</feature>
<feature type="active site" description="Proton acceptor" evidence="1">
    <location>
        <position position="248"/>
    </location>
</feature>
<feature type="active site" description="Proton donor" evidence="1">
    <location>
        <position position="270"/>
    </location>
</feature>
<feature type="binding site" evidence="1">
    <location>
        <begin position="22"/>
        <end position="23"/>
    </location>
    <ligand>
        <name>NAD(+)</name>
        <dbReference type="ChEBI" id="CHEBI:57540"/>
    </ligand>
</feature>
<feature type="binding site" evidence="1">
    <location>
        <begin position="43"/>
        <end position="44"/>
    </location>
    <ligand>
        <name>NAD(+)</name>
        <dbReference type="ChEBI" id="CHEBI:57540"/>
    </ligand>
</feature>
<feature type="binding site" evidence="1">
    <location>
        <position position="225"/>
    </location>
    <ligand>
        <name>S-adenosyl-L-methionine</name>
        <dbReference type="ChEBI" id="CHEBI:59789"/>
    </ligand>
</feature>
<feature type="binding site" evidence="1">
    <location>
        <begin position="301"/>
        <end position="303"/>
    </location>
    <ligand>
        <name>S-adenosyl-L-methionine</name>
        <dbReference type="ChEBI" id="CHEBI:59789"/>
    </ligand>
</feature>
<feature type="binding site" evidence="1">
    <location>
        <position position="306"/>
    </location>
    <ligand>
        <name>S-adenosyl-L-methionine</name>
        <dbReference type="ChEBI" id="CHEBI:59789"/>
    </ligand>
</feature>
<feature type="binding site" evidence="1">
    <location>
        <begin position="331"/>
        <end position="332"/>
    </location>
    <ligand>
        <name>S-adenosyl-L-methionine</name>
        <dbReference type="ChEBI" id="CHEBI:59789"/>
    </ligand>
</feature>
<feature type="binding site" evidence="1">
    <location>
        <position position="382"/>
    </location>
    <ligand>
        <name>S-adenosyl-L-methionine</name>
        <dbReference type="ChEBI" id="CHEBI:59789"/>
    </ligand>
</feature>
<feature type="binding site" evidence="1">
    <location>
        <position position="411"/>
    </location>
    <ligand>
        <name>S-adenosyl-L-methionine</name>
        <dbReference type="ChEBI" id="CHEBI:59789"/>
    </ligand>
</feature>
<feature type="modified residue" description="Phosphoserine" evidence="1">
    <location>
        <position position="128"/>
    </location>
</feature>